<dbReference type="EC" id="4.2.1.108" evidence="1"/>
<dbReference type="EMBL" id="CP001614">
    <property type="protein sequence ID" value="ACR13313.1"/>
    <property type="molecule type" value="Genomic_DNA"/>
</dbReference>
<dbReference type="RefSeq" id="WP_015819426.1">
    <property type="nucleotide sequence ID" value="NC_012997.1"/>
</dbReference>
<dbReference type="SMR" id="C5BQN7"/>
<dbReference type="STRING" id="377629.TERTU_3380"/>
<dbReference type="KEGG" id="ttu:TERTU_3380"/>
<dbReference type="eggNOG" id="COG1917">
    <property type="taxonomic scope" value="Bacteria"/>
</dbReference>
<dbReference type="HOGENOM" id="CLU_154525_0_0_6"/>
<dbReference type="OrthoDB" id="9801830at2"/>
<dbReference type="UniPathway" id="UPA00067">
    <property type="reaction ID" value="UER00123"/>
</dbReference>
<dbReference type="Proteomes" id="UP000009080">
    <property type="component" value="Chromosome"/>
</dbReference>
<dbReference type="GO" id="GO:0033990">
    <property type="term" value="F:ectoine synthase activity"/>
    <property type="evidence" value="ECO:0007669"/>
    <property type="project" value="UniProtKB-EC"/>
</dbReference>
<dbReference type="GO" id="GO:0019491">
    <property type="term" value="P:ectoine biosynthetic process"/>
    <property type="evidence" value="ECO:0007669"/>
    <property type="project" value="UniProtKB-UniRule"/>
</dbReference>
<dbReference type="CDD" id="cd06978">
    <property type="entry name" value="cupin_EctC"/>
    <property type="match status" value="1"/>
</dbReference>
<dbReference type="Gene3D" id="2.60.120.10">
    <property type="entry name" value="Jelly Rolls"/>
    <property type="match status" value="1"/>
</dbReference>
<dbReference type="HAMAP" id="MF_01255">
    <property type="entry name" value="Ectoine_synth"/>
    <property type="match status" value="1"/>
</dbReference>
<dbReference type="InterPro" id="IPR010462">
    <property type="entry name" value="Ectoine_synth"/>
</dbReference>
<dbReference type="InterPro" id="IPR014710">
    <property type="entry name" value="RmlC-like_jellyroll"/>
</dbReference>
<dbReference type="InterPro" id="IPR011051">
    <property type="entry name" value="RmlC_Cupin_sf"/>
</dbReference>
<dbReference type="NCBIfam" id="NF009806">
    <property type="entry name" value="PRK13290.1"/>
    <property type="match status" value="1"/>
</dbReference>
<dbReference type="PANTHER" id="PTHR39289">
    <property type="match status" value="1"/>
</dbReference>
<dbReference type="PANTHER" id="PTHR39289:SF1">
    <property type="entry name" value="L-ECTOINE SYNTHASE"/>
    <property type="match status" value="1"/>
</dbReference>
<dbReference type="Pfam" id="PF06339">
    <property type="entry name" value="Ectoine_synth"/>
    <property type="match status" value="1"/>
</dbReference>
<dbReference type="SUPFAM" id="SSF51182">
    <property type="entry name" value="RmlC-like cupins"/>
    <property type="match status" value="1"/>
</dbReference>
<comment type="function">
    <text evidence="1">Catalyzes the circularization of gamma-N-acetyl-alpha,gamma-diaminobutyric acid (ADABA) to ectoine (1,4,5,6-tetrahydro-2-methyl-4-pyrimidine carboxylic acid), which is an excellent osmoprotectant.</text>
</comment>
<comment type="catalytic activity">
    <reaction evidence="1">
        <text>(2S)-4-acetamido-2-aminobutanoate = L-ectoine + H2O</text>
        <dbReference type="Rhea" id="RHEA:17281"/>
        <dbReference type="ChEBI" id="CHEBI:15377"/>
        <dbReference type="ChEBI" id="CHEBI:58515"/>
        <dbReference type="ChEBI" id="CHEBI:58929"/>
        <dbReference type="EC" id="4.2.1.108"/>
    </reaction>
</comment>
<comment type="pathway">
    <text evidence="1">Amine and polyamine biosynthesis; ectoine biosynthesis; L-ectoine from L-aspartate 4-semialdehyde: step 3/3.</text>
</comment>
<comment type="similarity">
    <text evidence="1">Belongs to the ectoine synthase family.</text>
</comment>
<protein>
    <recommendedName>
        <fullName evidence="1">L-ectoine synthase</fullName>
        <ecNumber evidence="1">4.2.1.108</ecNumber>
    </recommendedName>
    <alternativeName>
        <fullName evidence="1">N-acetyldiaminobutyrate dehydratase</fullName>
    </alternativeName>
</protein>
<evidence type="ECO:0000255" key="1">
    <source>
        <dbReference type="HAMAP-Rule" id="MF_01255"/>
    </source>
</evidence>
<feature type="chain" id="PRO_1000214119" description="L-ectoine synthase">
    <location>
        <begin position="1"/>
        <end position="132"/>
    </location>
</feature>
<gene>
    <name evidence="1" type="primary">ectC</name>
    <name type="ordered locus">TERTU_3380</name>
</gene>
<name>ECTC_TERTT</name>
<keyword id="KW-0456">Lyase</keyword>
<keyword id="KW-1185">Reference proteome</keyword>
<organism>
    <name type="scientific">Teredinibacter turnerae (strain ATCC 39867 / T7901)</name>
    <dbReference type="NCBI Taxonomy" id="377629"/>
    <lineage>
        <taxon>Bacteria</taxon>
        <taxon>Pseudomonadati</taxon>
        <taxon>Pseudomonadota</taxon>
        <taxon>Gammaproteobacteria</taxon>
        <taxon>Cellvibrionales</taxon>
        <taxon>Cellvibrionaceae</taxon>
        <taxon>Teredinibacter</taxon>
    </lineage>
</organism>
<reference key="1">
    <citation type="journal article" date="2009" name="PLoS ONE">
        <title>The complete genome of Teredinibacter turnerae T7901: an intracellular endosymbiont of marine wood-boring bivalves (shipworms).</title>
        <authorList>
            <person name="Yang J.C."/>
            <person name="Madupu R."/>
            <person name="Durkin A.S."/>
            <person name="Ekborg N.A."/>
            <person name="Pedamallu C.S."/>
            <person name="Hostetler J.B."/>
            <person name="Radune D."/>
            <person name="Toms B.S."/>
            <person name="Henrissat B."/>
            <person name="Coutinho P.M."/>
            <person name="Schwarz S."/>
            <person name="Field L."/>
            <person name="Trindade-Silva A.E."/>
            <person name="Soares C.A.G."/>
            <person name="Elshahawi S."/>
            <person name="Hanora A."/>
            <person name="Schmidt E.W."/>
            <person name="Haygood M.G."/>
            <person name="Posfai J."/>
            <person name="Benner J."/>
            <person name="Madinger C."/>
            <person name="Nove J."/>
            <person name="Anton B."/>
            <person name="Chaudhary K."/>
            <person name="Foster J."/>
            <person name="Holman A."/>
            <person name="Kumar S."/>
            <person name="Lessard P.A."/>
            <person name="Luyten Y.A."/>
            <person name="Slatko B."/>
            <person name="Wood N."/>
            <person name="Wu B."/>
            <person name="Teplitski M."/>
            <person name="Mougous J.D."/>
            <person name="Ward N."/>
            <person name="Eisen J.A."/>
            <person name="Badger J.H."/>
            <person name="Distel D.L."/>
        </authorList>
    </citation>
    <scope>NUCLEOTIDE SEQUENCE [LARGE SCALE GENOMIC DNA]</scope>
    <source>
        <strain>ATCC 39867 / T7901</strain>
    </source>
</reference>
<sequence length="132" mass="15210">MIVRNLTEARDSNRRIVSPDGNWESTRMLLKDDKMGFSFHITTIYKGADFRMHYQNHLESVYCVRGRGEVETLADGKKYPIEPGTLYILDKHDEHMLRAFEEMEMACVFNPPLNGTEVHNAEGAYELNAEAL</sequence>
<proteinExistence type="inferred from homology"/>
<accession>C5BQN7</accession>